<gene>
    <name evidence="1" type="primary">ispG</name>
    <name type="synonym">gcpE</name>
    <name type="ordered locus">BruAb1_1761</name>
</gene>
<sequence>MSSETVSYFSHPFPRRQSVGVSVGGVIVGGSAPVVVQSMTNTDTADVDSTVAQVAALHRAGSEIVRITVDRDESAAAVPKIRERLERLGHDVPLVGDFHYIGHKLLADHPACAEALSKYRINPGNVGFKDKKDKQFADIVEMAIRYDKPVRIGVNWGSLDQELLTALMDRNQAEGAPLSAQDVMREAIVQSALISANLAEEIGLGRDKIILSAKVSQVQDLIAVYTMLAQRSNHALHLGLTEAGMGTKGIVASSAAMGILLQQGIGDTIRISLTPEPGGDRTREVQVAQELLQTMGFRQFVPIVAACPGCGRTTSTVFQELAQTIQEDIRRNMPLWREKYPGVEALSVAVMGCIVNGPGESKHADIGISLPGTGETPSAPVFVDGKKVTTLRGPGIAEDFQKMVADYIENRFGLGRKIAS</sequence>
<keyword id="KW-0004">4Fe-4S</keyword>
<keyword id="KW-0408">Iron</keyword>
<keyword id="KW-0411">Iron-sulfur</keyword>
<keyword id="KW-0414">Isoprene biosynthesis</keyword>
<keyword id="KW-0479">Metal-binding</keyword>
<keyword id="KW-0560">Oxidoreductase</keyword>
<feature type="chain" id="PRO_0000190546" description="4-hydroxy-3-methylbut-2-en-1-yl diphosphate synthase (flavodoxin)">
    <location>
        <begin position="1"/>
        <end position="420"/>
    </location>
</feature>
<feature type="binding site" evidence="1">
    <location>
        <position position="307"/>
    </location>
    <ligand>
        <name>[4Fe-4S] cluster</name>
        <dbReference type="ChEBI" id="CHEBI:49883"/>
    </ligand>
</feature>
<feature type="binding site" evidence="1">
    <location>
        <position position="310"/>
    </location>
    <ligand>
        <name>[4Fe-4S] cluster</name>
        <dbReference type="ChEBI" id="CHEBI:49883"/>
    </ligand>
</feature>
<feature type="binding site" evidence="1">
    <location>
        <position position="353"/>
    </location>
    <ligand>
        <name>[4Fe-4S] cluster</name>
        <dbReference type="ChEBI" id="CHEBI:49883"/>
    </ligand>
</feature>
<feature type="binding site" evidence="1">
    <location>
        <position position="360"/>
    </location>
    <ligand>
        <name>[4Fe-4S] cluster</name>
        <dbReference type="ChEBI" id="CHEBI:49883"/>
    </ligand>
</feature>
<comment type="function">
    <text evidence="1">Converts 2C-methyl-D-erythritol 2,4-cyclodiphosphate (ME-2,4cPP) into 1-hydroxy-2-methyl-2-(E)-butenyl 4-diphosphate.</text>
</comment>
<comment type="catalytic activity">
    <reaction evidence="1">
        <text>(2E)-4-hydroxy-3-methylbut-2-enyl diphosphate + oxidized [flavodoxin] + H2O + 2 H(+) = 2-C-methyl-D-erythritol 2,4-cyclic diphosphate + reduced [flavodoxin]</text>
        <dbReference type="Rhea" id="RHEA:43604"/>
        <dbReference type="Rhea" id="RHEA-COMP:10622"/>
        <dbReference type="Rhea" id="RHEA-COMP:10623"/>
        <dbReference type="ChEBI" id="CHEBI:15377"/>
        <dbReference type="ChEBI" id="CHEBI:15378"/>
        <dbReference type="ChEBI" id="CHEBI:57618"/>
        <dbReference type="ChEBI" id="CHEBI:58210"/>
        <dbReference type="ChEBI" id="CHEBI:58483"/>
        <dbReference type="ChEBI" id="CHEBI:128753"/>
        <dbReference type="EC" id="1.17.7.3"/>
    </reaction>
</comment>
<comment type="cofactor">
    <cofactor evidence="1">
        <name>[4Fe-4S] cluster</name>
        <dbReference type="ChEBI" id="CHEBI:49883"/>
    </cofactor>
    <text evidence="1">Binds 1 [4Fe-4S] cluster.</text>
</comment>
<comment type="pathway">
    <text evidence="1">Isoprenoid biosynthesis; isopentenyl diphosphate biosynthesis via DXP pathway; isopentenyl diphosphate from 1-deoxy-D-xylulose 5-phosphate: step 5/6.</text>
</comment>
<comment type="similarity">
    <text evidence="1">Belongs to the IspG family.</text>
</comment>
<organism>
    <name type="scientific">Brucella abortus biovar 1 (strain 9-941)</name>
    <dbReference type="NCBI Taxonomy" id="262698"/>
    <lineage>
        <taxon>Bacteria</taxon>
        <taxon>Pseudomonadati</taxon>
        <taxon>Pseudomonadota</taxon>
        <taxon>Alphaproteobacteria</taxon>
        <taxon>Hyphomicrobiales</taxon>
        <taxon>Brucellaceae</taxon>
        <taxon>Brucella/Ochrobactrum group</taxon>
        <taxon>Brucella</taxon>
    </lineage>
</organism>
<protein>
    <recommendedName>
        <fullName evidence="1">4-hydroxy-3-methylbut-2-en-1-yl diphosphate synthase (flavodoxin)</fullName>
        <ecNumber evidence="1">1.17.7.3</ecNumber>
    </recommendedName>
    <alternativeName>
        <fullName evidence="1">1-hydroxy-2-methyl-2-(E)-butenyl 4-diphosphate synthase</fullName>
    </alternativeName>
</protein>
<name>ISPG_BRUAB</name>
<evidence type="ECO:0000255" key="1">
    <source>
        <dbReference type="HAMAP-Rule" id="MF_00159"/>
    </source>
</evidence>
<reference key="1">
    <citation type="journal article" date="2005" name="J. Bacteriol.">
        <title>Completion of the genome sequence of Brucella abortus and comparison to the highly similar genomes of Brucella melitensis and Brucella suis.</title>
        <authorList>
            <person name="Halling S.M."/>
            <person name="Peterson-Burch B.D."/>
            <person name="Bricker B.J."/>
            <person name="Zuerner R.L."/>
            <person name="Qing Z."/>
            <person name="Li L.-L."/>
            <person name="Kapur V."/>
            <person name="Alt D.P."/>
            <person name="Olsen S.C."/>
        </authorList>
    </citation>
    <scope>NUCLEOTIDE SEQUENCE [LARGE SCALE GENOMIC DNA]</scope>
    <source>
        <strain>9-941</strain>
    </source>
</reference>
<proteinExistence type="inferred from homology"/>
<accession>Q57BA5</accession>
<dbReference type="EC" id="1.17.7.3" evidence="1"/>
<dbReference type="EMBL" id="AE017223">
    <property type="protein sequence ID" value="AAX75079.1"/>
    <property type="molecule type" value="Genomic_DNA"/>
</dbReference>
<dbReference type="RefSeq" id="WP_002966963.1">
    <property type="nucleotide sequence ID" value="NC_006932.1"/>
</dbReference>
<dbReference type="SMR" id="Q57BA5"/>
<dbReference type="EnsemblBacteria" id="AAX75079">
    <property type="protein sequence ID" value="AAX75079"/>
    <property type="gene ID" value="BruAb1_1761"/>
</dbReference>
<dbReference type="GeneID" id="93017877"/>
<dbReference type="KEGG" id="bmb:BruAb1_1761"/>
<dbReference type="HOGENOM" id="CLU_042258_1_0_5"/>
<dbReference type="UniPathway" id="UPA00056">
    <property type="reaction ID" value="UER00096"/>
</dbReference>
<dbReference type="Proteomes" id="UP000000540">
    <property type="component" value="Chromosome I"/>
</dbReference>
<dbReference type="GO" id="GO:0051539">
    <property type="term" value="F:4 iron, 4 sulfur cluster binding"/>
    <property type="evidence" value="ECO:0007669"/>
    <property type="project" value="UniProtKB-UniRule"/>
</dbReference>
<dbReference type="GO" id="GO:0046429">
    <property type="term" value="F:4-hydroxy-3-methylbut-2-en-1-yl diphosphate synthase activity (ferredoxin)"/>
    <property type="evidence" value="ECO:0007669"/>
    <property type="project" value="UniProtKB-UniRule"/>
</dbReference>
<dbReference type="GO" id="GO:0141197">
    <property type="term" value="F:4-hydroxy-3-methylbut-2-enyl-diphosphate synthase activity (flavodoxin)"/>
    <property type="evidence" value="ECO:0007669"/>
    <property type="project" value="UniProtKB-EC"/>
</dbReference>
<dbReference type="GO" id="GO:0005506">
    <property type="term" value="F:iron ion binding"/>
    <property type="evidence" value="ECO:0007669"/>
    <property type="project" value="InterPro"/>
</dbReference>
<dbReference type="GO" id="GO:0019288">
    <property type="term" value="P:isopentenyl diphosphate biosynthetic process, methylerythritol 4-phosphate pathway"/>
    <property type="evidence" value="ECO:0007669"/>
    <property type="project" value="UniProtKB-UniRule"/>
</dbReference>
<dbReference type="GO" id="GO:0016114">
    <property type="term" value="P:terpenoid biosynthetic process"/>
    <property type="evidence" value="ECO:0007669"/>
    <property type="project" value="InterPro"/>
</dbReference>
<dbReference type="FunFam" id="3.30.413.10:FF:000012">
    <property type="entry name" value="4-hydroxy-3-methylbut-2-en-1-yl diphosphate synthase (flavodoxin)"/>
    <property type="match status" value="1"/>
</dbReference>
<dbReference type="Gene3D" id="3.20.20.20">
    <property type="entry name" value="Dihydropteroate synthase-like"/>
    <property type="match status" value="1"/>
</dbReference>
<dbReference type="Gene3D" id="3.30.413.10">
    <property type="entry name" value="Sulfite Reductase Hemoprotein, domain 1"/>
    <property type="match status" value="1"/>
</dbReference>
<dbReference type="HAMAP" id="MF_00159">
    <property type="entry name" value="IspG"/>
    <property type="match status" value="1"/>
</dbReference>
<dbReference type="InterPro" id="IPR011005">
    <property type="entry name" value="Dihydropteroate_synth-like_sf"/>
</dbReference>
<dbReference type="InterPro" id="IPR016425">
    <property type="entry name" value="IspG_bac"/>
</dbReference>
<dbReference type="InterPro" id="IPR004588">
    <property type="entry name" value="IspG_bac-typ"/>
</dbReference>
<dbReference type="InterPro" id="IPR045854">
    <property type="entry name" value="NO2/SO3_Rdtase_4Fe4S_sf"/>
</dbReference>
<dbReference type="NCBIfam" id="TIGR00612">
    <property type="entry name" value="ispG_gcpE"/>
    <property type="match status" value="1"/>
</dbReference>
<dbReference type="NCBIfam" id="NF001540">
    <property type="entry name" value="PRK00366.1"/>
    <property type="match status" value="1"/>
</dbReference>
<dbReference type="PANTHER" id="PTHR30454">
    <property type="entry name" value="4-HYDROXY-3-METHYLBUT-2-EN-1-YL DIPHOSPHATE SYNTHASE"/>
    <property type="match status" value="1"/>
</dbReference>
<dbReference type="PANTHER" id="PTHR30454:SF0">
    <property type="entry name" value="4-HYDROXY-3-METHYLBUT-2-EN-1-YL DIPHOSPHATE SYNTHASE (FERREDOXIN), CHLOROPLASTIC"/>
    <property type="match status" value="1"/>
</dbReference>
<dbReference type="Pfam" id="PF04551">
    <property type="entry name" value="GcpE"/>
    <property type="match status" value="1"/>
</dbReference>
<dbReference type="PIRSF" id="PIRSF004640">
    <property type="entry name" value="IspG"/>
    <property type="match status" value="1"/>
</dbReference>
<dbReference type="SUPFAM" id="SSF56014">
    <property type="entry name" value="Nitrite and sulphite reductase 4Fe-4S domain-like"/>
    <property type="match status" value="1"/>
</dbReference>